<name>SERB_HAEIN</name>
<proteinExistence type="inferred from homology"/>
<feature type="chain" id="PRO_0000156888" description="Phosphoserine phosphatase">
    <location>
        <begin position="1"/>
        <end position="314"/>
    </location>
</feature>
<feature type="active site" description="Nucleophile" evidence="1">
    <location>
        <position position="109"/>
    </location>
</feature>
<feature type="active site" description="Proton donor" evidence="1">
    <location>
        <position position="111"/>
    </location>
</feature>
<feature type="binding site" evidence="1">
    <location>
        <position position="109"/>
    </location>
    <ligand>
        <name>Mg(2+)</name>
        <dbReference type="ChEBI" id="CHEBI:18420"/>
    </ligand>
</feature>
<feature type="binding site" evidence="1">
    <location>
        <position position="111"/>
    </location>
    <ligand>
        <name>Mg(2+)</name>
        <dbReference type="ChEBI" id="CHEBI:18420"/>
    </ligand>
</feature>
<feature type="binding site" evidence="1">
    <location>
        <position position="118"/>
    </location>
    <ligand>
        <name>substrate</name>
    </ligand>
</feature>
<feature type="binding site" evidence="1">
    <location>
        <position position="154"/>
    </location>
    <ligand>
        <name>substrate</name>
    </ligand>
</feature>
<feature type="binding site" evidence="1">
    <location>
        <begin position="197"/>
        <end position="198"/>
    </location>
    <ligand>
        <name>substrate</name>
    </ligand>
</feature>
<feature type="binding site" evidence="1">
    <location>
        <position position="242"/>
    </location>
    <ligand>
        <name>substrate</name>
    </ligand>
</feature>
<feature type="binding site" evidence="1">
    <location>
        <position position="265"/>
    </location>
    <ligand>
        <name>Mg(2+)</name>
        <dbReference type="ChEBI" id="CHEBI:18420"/>
    </ligand>
</feature>
<feature type="binding site" evidence="1">
    <location>
        <position position="268"/>
    </location>
    <ligand>
        <name>substrate</name>
    </ligand>
</feature>
<reference key="1">
    <citation type="journal article" date="1995" name="Science">
        <title>Whole-genome random sequencing and assembly of Haemophilus influenzae Rd.</title>
        <authorList>
            <person name="Fleischmann R.D."/>
            <person name="Adams M.D."/>
            <person name="White O."/>
            <person name="Clayton R.A."/>
            <person name="Kirkness E.F."/>
            <person name="Kerlavage A.R."/>
            <person name="Bult C.J."/>
            <person name="Tomb J.-F."/>
            <person name="Dougherty B.A."/>
            <person name="Merrick J.M."/>
            <person name="McKenney K."/>
            <person name="Sutton G.G."/>
            <person name="FitzHugh W."/>
            <person name="Fields C.A."/>
            <person name="Gocayne J.D."/>
            <person name="Scott J.D."/>
            <person name="Shirley R."/>
            <person name="Liu L.-I."/>
            <person name="Glodek A."/>
            <person name="Kelley J.M."/>
            <person name="Weidman J.F."/>
            <person name="Phillips C.A."/>
            <person name="Spriggs T."/>
            <person name="Hedblom E."/>
            <person name="Cotton M.D."/>
            <person name="Utterback T.R."/>
            <person name="Hanna M.C."/>
            <person name="Nguyen D.T."/>
            <person name="Saudek D.M."/>
            <person name="Brandon R.C."/>
            <person name="Fine L.D."/>
            <person name="Fritchman J.L."/>
            <person name="Fuhrmann J.L."/>
            <person name="Geoghagen N.S.M."/>
            <person name="Gnehm C.L."/>
            <person name="McDonald L.A."/>
            <person name="Small K.V."/>
            <person name="Fraser C.M."/>
            <person name="Smith H.O."/>
            <person name="Venter J.C."/>
        </authorList>
    </citation>
    <scope>NUCLEOTIDE SEQUENCE [LARGE SCALE GENOMIC DNA]</scope>
    <source>
        <strain>ATCC 51907 / DSM 11121 / KW20 / Rd</strain>
    </source>
</reference>
<organism>
    <name type="scientific">Haemophilus influenzae (strain ATCC 51907 / DSM 11121 / KW20 / Rd)</name>
    <dbReference type="NCBI Taxonomy" id="71421"/>
    <lineage>
        <taxon>Bacteria</taxon>
        <taxon>Pseudomonadati</taxon>
        <taxon>Pseudomonadota</taxon>
        <taxon>Gammaproteobacteria</taxon>
        <taxon>Pasteurellales</taxon>
        <taxon>Pasteurellaceae</taxon>
        <taxon>Haemophilus</taxon>
    </lineage>
</organism>
<sequence length="314" mass="34720">MQIQCFESITQKYPQFPTALLANEEPIQNGEPFILYGTKLDITKLEKFQQKCGQNFQIFDVWMVAKNIIVLLKGQWFSDFIKFTHDVEVDIAKLDFSPKLSQAGLLVMDMDSTAIQIECIDEIAKLAGVGELVSAITESAMRGELDFEQSLRCRVGTLKGAPESILQQVRENLPLMSGLVETIQTLQKYGWKTAIASGGFTYFADYLKALLQLDFAASNQFDIEDGKLTGLVKGDVVDAQYKAKTLQHLLEEYGIDSRHSIAIGDGANDLAMMNVAGLGVAFHAKPKVQPQAQIVVNFADLTALLCLLSANDRI</sequence>
<protein>
    <recommendedName>
        <fullName>Phosphoserine phosphatase</fullName>
        <shortName>PSP</shortName>
        <shortName>PSPase</shortName>
        <ecNumber>3.1.3.3</ecNumber>
    </recommendedName>
    <alternativeName>
        <fullName>O-phosphoserine phosphohydrolase</fullName>
    </alternativeName>
</protein>
<dbReference type="EC" id="3.1.3.3"/>
<dbReference type="EMBL" id="L42023">
    <property type="protein sequence ID" value="AAC22693.1"/>
    <property type="molecule type" value="Genomic_DNA"/>
</dbReference>
<dbReference type="PIR" id="I64108">
    <property type="entry name" value="I64108"/>
</dbReference>
<dbReference type="RefSeq" id="NP_439193.1">
    <property type="nucleotide sequence ID" value="NC_000907.1"/>
</dbReference>
<dbReference type="SMR" id="P44997"/>
<dbReference type="STRING" id="71421.HI_1033"/>
<dbReference type="EnsemblBacteria" id="AAC22693">
    <property type="protein sequence ID" value="AAC22693"/>
    <property type="gene ID" value="HI_1033"/>
</dbReference>
<dbReference type="KEGG" id="hin:HI_1033"/>
<dbReference type="PATRIC" id="fig|71421.8.peg.1077"/>
<dbReference type="eggNOG" id="COG0560">
    <property type="taxonomic scope" value="Bacteria"/>
</dbReference>
<dbReference type="HOGENOM" id="CLU_036368_4_0_6"/>
<dbReference type="OrthoDB" id="9792539at2"/>
<dbReference type="PhylomeDB" id="P44997"/>
<dbReference type="BioCyc" id="HINF71421:G1GJ1-1073-MONOMER"/>
<dbReference type="UniPathway" id="UPA00135">
    <property type="reaction ID" value="UER00198"/>
</dbReference>
<dbReference type="Proteomes" id="UP000000579">
    <property type="component" value="Chromosome"/>
</dbReference>
<dbReference type="GO" id="GO:0005737">
    <property type="term" value="C:cytoplasm"/>
    <property type="evidence" value="ECO:0000318"/>
    <property type="project" value="GO_Central"/>
</dbReference>
<dbReference type="GO" id="GO:0036424">
    <property type="term" value="F:L-phosphoserine phosphatase activity"/>
    <property type="evidence" value="ECO:0000318"/>
    <property type="project" value="GO_Central"/>
</dbReference>
<dbReference type="GO" id="GO:0000287">
    <property type="term" value="F:magnesium ion binding"/>
    <property type="evidence" value="ECO:0000318"/>
    <property type="project" value="GO_Central"/>
</dbReference>
<dbReference type="GO" id="GO:0006564">
    <property type="term" value="P:L-serine biosynthetic process"/>
    <property type="evidence" value="ECO:0000318"/>
    <property type="project" value="GO_Central"/>
</dbReference>
<dbReference type="CDD" id="cd07500">
    <property type="entry name" value="HAD_PSP"/>
    <property type="match status" value="1"/>
</dbReference>
<dbReference type="FunFam" id="1.10.150.210:FF:000001">
    <property type="entry name" value="Phosphoserine phosphatase"/>
    <property type="match status" value="1"/>
</dbReference>
<dbReference type="FunFam" id="3.40.50.1000:FF:000048">
    <property type="entry name" value="Phosphoserine phosphatase"/>
    <property type="match status" value="1"/>
</dbReference>
<dbReference type="Gene3D" id="3.30.70.2020">
    <property type="match status" value="1"/>
</dbReference>
<dbReference type="Gene3D" id="3.40.50.1000">
    <property type="entry name" value="HAD superfamily/HAD-like"/>
    <property type="match status" value="1"/>
</dbReference>
<dbReference type="Gene3D" id="1.10.150.210">
    <property type="entry name" value="Phosphoserine phosphatase, domain 2"/>
    <property type="match status" value="1"/>
</dbReference>
<dbReference type="InterPro" id="IPR050582">
    <property type="entry name" value="HAD-like_SerB"/>
</dbReference>
<dbReference type="InterPro" id="IPR036412">
    <property type="entry name" value="HAD-like_sf"/>
</dbReference>
<dbReference type="InterPro" id="IPR023214">
    <property type="entry name" value="HAD_sf"/>
</dbReference>
<dbReference type="InterPro" id="IPR004469">
    <property type="entry name" value="PSP"/>
</dbReference>
<dbReference type="InterPro" id="IPR041449">
    <property type="entry name" value="SerB_N"/>
</dbReference>
<dbReference type="NCBIfam" id="TIGR01488">
    <property type="entry name" value="HAD-SF-IB"/>
    <property type="match status" value="1"/>
</dbReference>
<dbReference type="NCBIfam" id="NF008350">
    <property type="entry name" value="PRK11133.1"/>
    <property type="match status" value="1"/>
</dbReference>
<dbReference type="NCBIfam" id="TIGR00338">
    <property type="entry name" value="serB"/>
    <property type="match status" value="1"/>
</dbReference>
<dbReference type="PANTHER" id="PTHR43344">
    <property type="entry name" value="PHOSPHOSERINE PHOSPHATASE"/>
    <property type="match status" value="1"/>
</dbReference>
<dbReference type="PANTHER" id="PTHR43344:SF2">
    <property type="entry name" value="PHOSPHOSERINE PHOSPHATASE"/>
    <property type="match status" value="1"/>
</dbReference>
<dbReference type="Pfam" id="PF18429">
    <property type="entry name" value="DUF5609"/>
    <property type="match status" value="1"/>
</dbReference>
<dbReference type="Pfam" id="PF00702">
    <property type="entry name" value="Hydrolase"/>
    <property type="match status" value="1"/>
</dbReference>
<dbReference type="SFLD" id="SFLDG01136">
    <property type="entry name" value="C1.6:_Phosphoserine_Phosphatas"/>
    <property type="match status" value="1"/>
</dbReference>
<dbReference type="SFLD" id="SFLDF00029">
    <property type="entry name" value="phosphoserine_phosphatase"/>
    <property type="match status" value="1"/>
</dbReference>
<dbReference type="SUPFAM" id="SSF56784">
    <property type="entry name" value="HAD-like"/>
    <property type="match status" value="1"/>
</dbReference>
<evidence type="ECO:0000250" key="1"/>
<evidence type="ECO:0000305" key="2"/>
<gene>
    <name type="primary">serB</name>
    <name type="ordered locus">HI_1033</name>
</gene>
<comment type="function">
    <text evidence="1">Catalyzes the dephosphorylation of phosphoserine (P-Ser).</text>
</comment>
<comment type="catalytic activity">
    <reaction>
        <text>O-phospho-L-serine + H2O = L-serine + phosphate</text>
        <dbReference type="Rhea" id="RHEA:21208"/>
        <dbReference type="ChEBI" id="CHEBI:15377"/>
        <dbReference type="ChEBI" id="CHEBI:33384"/>
        <dbReference type="ChEBI" id="CHEBI:43474"/>
        <dbReference type="ChEBI" id="CHEBI:57524"/>
        <dbReference type="EC" id="3.1.3.3"/>
    </reaction>
</comment>
<comment type="catalytic activity">
    <reaction>
        <text>O-phospho-D-serine + H2O = D-serine + phosphate</text>
        <dbReference type="Rhea" id="RHEA:24873"/>
        <dbReference type="ChEBI" id="CHEBI:15377"/>
        <dbReference type="ChEBI" id="CHEBI:35247"/>
        <dbReference type="ChEBI" id="CHEBI:43474"/>
        <dbReference type="ChEBI" id="CHEBI:58680"/>
        <dbReference type="EC" id="3.1.3.3"/>
    </reaction>
</comment>
<comment type="cofactor">
    <cofactor evidence="1">
        <name>Mg(2+)</name>
        <dbReference type="ChEBI" id="CHEBI:18420"/>
    </cofactor>
    <text evidence="1">Binds 1 Mg(2+) ion per subunit.</text>
</comment>
<comment type="pathway">
    <text>Amino-acid biosynthesis; L-serine biosynthesis; L-serine from 3-phospho-D-glycerate: step 3/3.</text>
</comment>
<comment type="similarity">
    <text evidence="2">Belongs to the HAD-like hydrolase superfamily. SerB family.</text>
</comment>
<keyword id="KW-0028">Amino-acid biosynthesis</keyword>
<keyword id="KW-0378">Hydrolase</keyword>
<keyword id="KW-0460">Magnesium</keyword>
<keyword id="KW-0479">Metal-binding</keyword>
<keyword id="KW-1185">Reference proteome</keyword>
<keyword id="KW-0718">Serine biosynthesis</keyword>
<accession>P44997</accession>